<organism>
    <name type="scientific">Stutzerimonas stutzeri</name>
    <name type="common">Pseudomonas stutzeri</name>
    <dbReference type="NCBI Taxonomy" id="316"/>
    <lineage>
        <taxon>Bacteria</taxon>
        <taxon>Pseudomonadati</taxon>
        <taxon>Pseudomonadota</taxon>
        <taxon>Gammaproteobacteria</taxon>
        <taxon>Pseudomonadales</taxon>
        <taxon>Pseudomonadaceae</taxon>
        <taxon>Stutzerimonas</taxon>
    </lineage>
</organism>
<protein>
    <recommendedName>
        <fullName evidence="1">Ion-translocating oxidoreductase complex subunit G</fullName>
        <ecNumber evidence="1">7.-.-.-</ecNumber>
    </recommendedName>
    <alternativeName>
        <fullName evidence="1">Rnf electron transport complex subunit G</fullName>
    </alternativeName>
</protein>
<accession>Q9EVN3</accession>
<dbReference type="EC" id="7.-.-.-" evidence="1"/>
<dbReference type="EMBL" id="AJ297529">
    <property type="protein sequence ID" value="CAC03728.1"/>
    <property type="molecule type" value="Genomic_DNA"/>
</dbReference>
<dbReference type="SMR" id="Q9EVN3"/>
<dbReference type="GO" id="GO:0005886">
    <property type="term" value="C:plasma membrane"/>
    <property type="evidence" value="ECO:0007669"/>
    <property type="project" value="UniProtKB-SubCell"/>
</dbReference>
<dbReference type="GO" id="GO:0009055">
    <property type="term" value="F:electron transfer activity"/>
    <property type="evidence" value="ECO:0007669"/>
    <property type="project" value="InterPro"/>
</dbReference>
<dbReference type="GO" id="GO:0010181">
    <property type="term" value="F:FMN binding"/>
    <property type="evidence" value="ECO:0007669"/>
    <property type="project" value="InterPro"/>
</dbReference>
<dbReference type="GO" id="GO:0022900">
    <property type="term" value="P:electron transport chain"/>
    <property type="evidence" value="ECO:0007669"/>
    <property type="project" value="UniProtKB-UniRule"/>
</dbReference>
<dbReference type="HAMAP" id="MF_00479">
    <property type="entry name" value="RsxG_RnfG"/>
    <property type="match status" value="1"/>
</dbReference>
<dbReference type="InterPro" id="IPR007329">
    <property type="entry name" value="FMN-bd"/>
</dbReference>
<dbReference type="InterPro" id="IPR010209">
    <property type="entry name" value="Ion_transpt_RnfG/RsxG"/>
</dbReference>
<dbReference type="NCBIfam" id="NF002519">
    <property type="entry name" value="PRK01908.1"/>
    <property type="match status" value="1"/>
</dbReference>
<dbReference type="NCBIfam" id="TIGR01947">
    <property type="entry name" value="rnfG"/>
    <property type="match status" value="1"/>
</dbReference>
<dbReference type="PANTHER" id="PTHR36118">
    <property type="entry name" value="ION-TRANSLOCATING OXIDOREDUCTASE COMPLEX SUBUNIT G"/>
    <property type="match status" value="1"/>
</dbReference>
<dbReference type="PANTHER" id="PTHR36118:SF1">
    <property type="entry name" value="ION-TRANSLOCATING OXIDOREDUCTASE COMPLEX SUBUNIT G"/>
    <property type="match status" value="1"/>
</dbReference>
<dbReference type="Pfam" id="PF04205">
    <property type="entry name" value="FMN_bind"/>
    <property type="match status" value="1"/>
</dbReference>
<dbReference type="PIRSF" id="PIRSF006091">
    <property type="entry name" value="E_trnsport_RnfG"/>
    <property type="match status" value="1"/>
</dbReference>
<dbReference type="SMART" id="SM00900">
    <property type="entry name" value="FMN_bind"/>
    <property type="match status" value="1"/>
</dbReference>
<sequence length="228" mass="24874">MNELTQTPPVADGNEPPFTRPGLVETWRERVSYQALSLGLVCALVAVALLLGNQLTHQRIVDAERQDRLAVLRQVLPQALYDNDPLADAFNVEDAELGLIEVYPARRAGQLTATAFQISTVGYGGPIVQFIALDSEGRILGVRVLSHKETPGLADKIEVTRSDWIKAFDGLSLASTPLDQWAVKKDGGQFDQFAGATITPRAIVKGVLRALEFQARQSTAQSNQETRP</sequence>
<gene>
    <name evidence="1" type="primary">rnfG</name>
</gene>
<evidence type="ECO:0000255" key="1">
    <source>
        <dbReference type="HAMAP-Rule" id="MF_00479"/>
    </source>
</evidence>
<name>RNFG_STUST</name>
<feature type="chain" id="PRO_0000214638" description="Ion-translocating oxidoreductase complex subunit G">
    <location>
        <begin position="1"/>
        <end position="228"/>
    </location>
</feature>
<feature type="transmembrane region" description="Helical" evidence="1">
    <location>
        <begin position="35"/>
        <end position="55"/>
    </location>
</feature>
<feature type="modified residue" description="FMN phosphoryl threonine" evidence="1">
    <location>
        <position position="197"/>
    </location>
</feature>
<proteinExistence type="inferred from homology"/>
<keyword id="KW-0997">Cell inner membrane</keyword>
<keyword id="KW-1003">Cell membrane</keyword>
<keyword id="KW-0249">Electron transport</keyword>
<keyword id="KW-0285">Flavoprotein</keyword>
<keyword id="KW-0288">FMN</keyword>
<keyword id="KW-0472">Membrane</keyword>
<keyword id="KW-0597">Phosphoprotein</keyword>
<keyword id="KW-1278">Translocase</keyword>
<keyword id="KW-0812">Transmembrane</keyword>
<keyword id="KW-1133">Transmembrane helix</keyword>
<keyword id="KW-0813">Transport</keyword>
<comment type="function">
    <text evidence="1">Part of a membrane-bound complex that couples electron transfer with translocation of ions across the membrane.</text>
</comment>
<comment type="cofactor">
    <cofactor evidence="1">
        <name>FMN</name>
        <dbReference type="ChEBI" id="CHEBI:58210"/>
    </cofactor>
</comment>
<comment type="subunit">
    <text evidence="1">The complex is composed of six subunits: RnfA, RnfB, RnfC, RnfD, RnfE and RnfG.</text>
</comment>
<comment type="subcellular location">
    <subcellularLocation>
        <location evidence="1">Cell inner membrane</location>
        <topology evidence="1">Single-pass membrane protein</topology>
    </subcellularLocation>
</comment>
<comment type="similarity">
    <text evidence="1">Belongs to the RnfG family.</text>
</comment>
<reference key="1">
    <citation type="submission" date="2000-08" db="EMBL/GenBank/DDBJ databases">
        <title>Organisation of nif genes in Pseudomonas stutzeri A15, a rice endophyte.</title>
        <authorList>
            <person name="Desnoues N."/>
            <person name="Lin M."/>
            <person name="Elmerich C."/>
        </authorList>
    </citation>
    <scope>NUCLEOTIDE SEQUENCE [GENOMIC DNA]</scope>
    <source>
        <strain>A15</strain>
    </source>
</reference>